<reference key="1">
    <citation type="journal article" date="1996" name="Science">
        <title>Complete genome sequence of the methanogenic archaeon, Methanococcus jannaschii.</title>
        <authorList>
            <person name="Bult C.J."/>
            <person name="White O."/>
            <person name="Olsen G.J."/>
            <person name="Zhou L."/>
            <person name="Fleischmann R.D."/>
            <person name="Sutton G.G."/>
            <person name="Blake J.A."/>
            <person name="FitzGerald L.M."/>
            <person name="Clayton R.A."/>
            <person name="Gocayne J.D."/>
            <person name="Kerlavage A.R."/>
            <person name="Dougherty B.A."/>
            <person name="Tomb J.-F."/>
            <person name="Adams M.D."/>
            <person name="Reich C.I."/>
            <person name="Overbeek R."/>
            <person name="Kirkness E.F."/>
            <person name="Weinstock K.G."/>
            <person name="Merrick J.M."/>
            <person name="Glodek A."/>
            <person name="Scott J.L."/>
            <person name="Geoghagen N.S.M."/>
            <person name="Weidman J.F."/>
            <person name="Fuhrmann J.L."/>
            <person name="Nguyen D."/>
            <person name="Utterback T.R."/>
            <person name="Kelley J.M."/>
            <person name="Peterson J.D."/>
            <person name="Sadow P.W."/>
            <person name="Hanna M.C."/>
            <person name="Cotton M.D."/>
            <person name="Roberts K.M."/>
            <person name="Hurst M.A."/>
            <person name="Kaine B.P."/>
            <person name="Borodovsky M."/>
            <person name="Klenk H.-P."/>
            <person name="Fraser C.M."/>
            <person name="Smith H.O."/>
            <person name="Woese C.R."/>
            <person name="Venter J.C."/>
        </authorList>
    </citation>
    <scope>NUCLEOTIDE SEQUENCE [LARGE SCALE GENOMIC DNA]</scope>
    <source>
        <strain>ATCC 43067 / DSM 2661 / JAL-1 / JCM 10045 / NBRC 100440</strain>
    </source>
</reference>
<dbReference type="EMBL" id="L77117">
    <property type="protein sequence ID" value="AAB98989.1"/>
    <property type="molecule type" value="Genomic_DNA"/>
</dbReference>
<dbReference type="PIR" id="C64423">
    <property type="entry name" value="C64423"/>
</dbReference>
<dbReference type="RefSeq" id="WP_064496690.1">
    <property type="nucleotide sequence ID" value="NC_000909.1"/>
</dbReference>
<dbReference type="SMR" id="Q58394"/>
<dbReference type="FunCoup" id="Q58394">
    <property type="interactions" value="1"/>
</dbReference>
<dbReference type="STRING" id="243232.MJ_0987"/>
<dbReference type="PaxDb" id="243232-MJ_0987"/>
<dbReference type="EnsemblBacteria" id="AAB98989">
    <property type="protein sequence ID" value="AAB98989"/>
    <property type="gene ID" value="MJ_0987"/>
</dbReference>
<dbReference type="GeneID" id="1451885"/>
<dbReference type="KEGG" id="mja:MJ_0987"/>
<dbReference type="eggNOG" id="arCOG01342">
    <property type="taxonomic scope" value="Archaea"/>
</dbReference>
<dbReference type="HOGENOM" id="CLU_131909_0_1_2"/>
<dbReference type="InParanoid" id="Q58394"/>
<dbReference type="Proteomes" id="UP000000805">
    <property type="component" value="Chromosome"/>
</dbReference>
<dbReference type="GO" id="GO:0005737">
    <property type="term" value="C:cytoplasm"/>
    <property type="evidence" value="ECO:0000318"/>
    <property type="project" value="GO_Central"/>
</dbReference>
<dbReference type="GO" id="GO:0016272">
    <property type="term" value="C:prefoldin complex"/>
    <property type="evidence" value="ECO:0007669"/>
    <property type="project" value="UniProtKB-UniRule"/>
</dbReference>
<dbReference type="GO" id="GO:0044183">
    <property type="term" value="F:protein folding chaperone"/>
    <property type="evidence" value="ECO:0000318"/>
    <property type="project" value="GO_Central"/>
</dbReference>
<dbReference type="GO" id="GO:0051082">
    <property type="term" value="F:unfolded protein binding"/>
    <property type="evidence" value="ECO:0000318"/>
    <property type="project" value="GO_Central"/>
</dbReference>
<dbReference type="GO" id="GO:0006457">
    <property type="term" value="P:protein folding"/>
    <property type="evidence" value="ECO:0000318"/>
    <property type="project" value="GO_Central"/>
</dbReference>
<dbReference type="CDD" id="cd23162">
    <property type="entry name" value="Prefoldin_beta_GimC"/>
    <property type="match status" value="1"/>
</dbReference>
<dbReference type="FunFam" id="1.10.287.370:FF:000013">
    <property type="entry name" value="Prefoldin subunit beta"/>
    <property type="match status" value="1"/>
</dbReference>
<dbReference type="Gene3D" id="1.10.287.370">
    <property type="match status" value="1"/>
</dbReference>
<dbReference type="HAMAP" id="MF_00307">
    <property type="entry name" value="PfdB"/>
    <property type="match status" value="1"/>
</dbReference>
<dbReference type="InterPro" id="IPR002777">
    <property type="entry name" value="PFD_beta-like"/>
</dbReference>
<dbReference type="InterPro" id="IPR012713">
    <property type="entry name" value="PfdB"/>
</dbReference>
<dbReference type="InterPro" id="IPR009053">
    <property type="entry name" value="Prefoldin"/>
</dbReference>
<dbReference type="NCBIfam" id="TIGR02338">
    <property type="entry name" value="gimC_beta"/>
    <property type="match status" value="1"/>
</dbReference>
<dbReference type="PANTHER" id="PTHR20903:SF0">
    <property type="entry name" value="PREFOLDIN SUBUNIT 1"/>
    <property type="match status" value="1"/>
</dbReference>
<dbReference type="PANTHER" id="PTHR20903">
    <property type="entry name" value="PREFOLDIN SUBUNIT 1-RELATED"/>
    <property type="match status" value="1"/>
</dbReference>
<dbReference type="Pfam" id="PF01920">
    <property type="entry name" value="Prefoldin_2"/>
    <property type="match status" value="1"/>
</dbReference>
<dbReference type="SUPFAM" id="SSF46579">
    <property type="entry name" value="Prefoldin"/>
    <property type="match status" value="1"/>
</dbReference>
<gene>
    <name type="primary">pfdB</name>
    <name type="ordered locus">MJ0987</name>
</gene>
<keyword id="KW-0143">Chaperone</keyword>
<keyword id="KW-0963">Cytoplasm</keyword>
<keyword id="KW-1185">Reference proteome</keyword>
<feature type="chain" id="PRO_0000124860" description="Prefoldin subunit beta">
    <location>
        <begin position="1"/>
        <end position="113"/>
    </location>
</feature>
<sequence>MELPPQIQAQLMQLQQLQQQLQMILMQKQSVETELKECKKALEELEKSSSDEVYKLVGGLFVKRKKEDVKKELEEKVETLELRVKTLEKQEEKLQSRLKELQEKIQKMIPTAQ</sequence>
<organism>
    <name type="scientific">Methanocaldococcus jannaschii (strain ATCC 43067 / DSM 2661 / JAL-1 / JCM 10045 / NBRC 100440)</name>
    <name type="common">Methanococcus jannaschii</name>
    <dbReference type="NCBI Taxonomy" id="243232"/>
    <lineage>
        <taxon>Archaea</taxon>
        <taxon>Methanobacteriati</taxon>
        <taxon>Methanobacteriota</taxon>
        <taxon>Methanomada group</taxon>
        <taxon>Methanococci</taxon>
        <taxon>Methanococcales</taxon>
        <taxon>Methanocaldococcaceae</taxon>
        <taxon>Methanocaldococcus</taxon>
    </lineage>
</organism>
<name>PFDB_METJA</name>
<evidence type="ECO:0000250" key="1"/>
<evidence type="ECO:0000305" key="2"/>
<protein>
    <recommendedName>
        <fullName>Prefoldin subunit beta</fullName>
    </recommendedName>
    <alternativeName>
        <fullName>GimC subunit beta</fullName>
    </alternativeName>
</protein>
<proteinExistence type="inferred from homology"/>
<accession>Q58394</accession>
<comment type="function">
    <text evidence="1">Molecular chaperone capable of stabilizing a range of proteins. Seems to fulfill an ATP-independent, HSP70-like function in archaeal de novo protein folding (By similarity).</text>
</comment>
<comment type="subunit">
    <text evidence="1">Heterohexamer of two alpha and four beta subunits.</text>
</comment>
<comment type="subcellular location">
    <subcellularLocation>
        <location evidence="1">Cytoplasm</location>
    </subcellularLocation>
</comment>
<comment type="similarity">
    <text evidence="2">Belongs to the prefoldin subunit beta family.</text>
</comment>